<protein>
    <recommendedName>
        <fullName evidence="1">Exodeoxyribonuclease 7 large subunit</fullName>
        <ecNumber evidence="1">3.1.11.6</ecNumber>
    </recommendedName>
    <alternativeName>
        <fullName evidence="1">Exodeoxyribonuclease VII large subunit</fullName>
        <shortName evidence="1">Exonuclease VII large subunit</shortName>
    </alternativeName>
</protein>
<name>EX7L_CLOBK</name>
<proteinExistence type="inferred from homology"/>
<gene>
    <name evidence="1" type="primary">xseA</name>
    <name type="ordered locus">CLD_2752</name>
</gene>
<comment type="function">
    <text evidence="1">Bidirectionally degrades single-stranded DNA into large acid-insoluble oligonucleotides, which are then degraded further into small acid-soluble oligonucleotides.</text>
</comment>
<comment type="catalytic activity">
    <reaction evidence="1">
        <text>Exonucleolytic cleavage in either 5'- to 3'- or 3'- to 5'-direction to yield nucleoside 5'-phosphates.</text>
        <dbReference type="EC" id="3.1.11.6"/>
    </reaction>
</comment>
<comment type="subunit">
    <text evidence="1">Heterooligomer composed of large and small subunits.</text>
</comment>
<comment type="subcellular location">
    <subcellularLocation>
        <location evidence="1">Cytoplasm</location>
    </subcellularLocation>
</comment>
<comment type="similarity">
    <text evidence="1">Belongs to the XseA family.</text>
</comment>
<keyword id="KW-0963">Cytoplasm</keyword>
<keyword id="KW-0269">Exonuclease</keyword>
<keyword id="KW-0378">Hydrolase</keyword>
<keyword id="KW-0540">Nuclease</keyword>
<accession>B1IMN8</accession>
<sequence length="403" mass="45657">MHIKTLTVSQLNRYVKNTLDADFILNNASVKGEISNLKIHSSGHIYFSLKDGGSKINCVMFKSYAYNLKFALENGMDVVALGNVSVYEKEGSYQLYVKDIKREGIGDLYVAFEKLKEKLKEEGLFDDVHKKEIPKFSKKVGVITSPTGAVLKDIINVTKRRNKGIELLIYPALVQGTNASRTLIEGIKILNKVEDVDIIILARGGGSIEELWAFNNEELAYAVYNSKKPIITGVGHETDFTIVDFVSDRRAPTPSAAAEIAVFDREVLINEILNYKYNIKNSMENIIKEKRNYLNLYKQKIEANSPTNIIVNEYKNIDNLKELLNMKIEGKLNKEKNNLSRLSSLLEAHNPLNVLKKGYTLIEDEGNNLITEKEALKKLNKINIIFKDGRAKLSIEYIEEFLK</sequence>
<organism>
    <name type="scientific">Clostridium botulinum (strain Okra / Type B1)</name>
    <dbReference type="NCBI Taxonomy" id="498213"/>
    <lineage>
        <taxon>Bacteria</taxon>
        <taxon>Bacillati</taxon>
        <taxon>Bacillota</taxon>
        <taxon>Clostridia</taxon>
        <taxon>Eubacteriales</taxon>
        <taxon>Clostridiaceae</taxon>
        <taxon>Clostridium</taxon>
    </lineage>
</organism>
<dbReference type="EC" id="3.1.11.6" evidence="1"/>
<dbReference type="EMBL" id="CP000939">
    <property type="protein sequence ID" value="ACA43710.1"/>
    <property type="molecule type" value="Genomic_DNA"/>
</dbReference>
<dbReference type="RefSeq" id="WP_004451821.1">
    <property type="nucleotide sequence ID" value="NC_010516.1"/>
</dbReference>
<dbReference type="SMR" id="B1IMN8"/>
<dbReference type="KEGG" id="cbb:CLD_2752"/>
<dbReference type="HOGENOM" id="CLU_023625_2_0_9"/>
<dbReference type="Proteomes" id="UP000008541">
    <property type="component" value="Chromosome"/>
</dbReference>
<dbReference type="GO" id="GO:0005737">
    <property type="term" value="C:cytoplasm"/>
    <property type="evidence" value="ECO:0007669"/>
    <property type="project" value="UniProtKB-SubCell"/>
</dbReference>
<dbReference type="GO" id="GO:0009318">
    <property type="term" value="C:exodeoxyribonuclease VII complex"/>
    <property type="evidence" value="ECO:0007669"/>
    <property type="project" value="InterPro"/>
</dbReference>
<dbReference type="GO" id="GO:0008855">
    <property type="term" value="F:exodeoxyribonuclease VII activity"/>
    <property type="evidence" value="ECO:0007669"/>
    <property type="project" value="UniProtKB-UniRule"/>
</dbReference>
<dbReference type="GO" id="GO:0003676">
    <property type="term" value="F:nucleic acid binding"/>
    <property type="evidence" value="ECO:0007669"/>
    <property type="project" value="InterPro"/>
</dbReference>
<dbReference type="GO" id="GO:0006308">
    <property type="term" value="P:DNA catabolic process"/>
    <property type="evidence" value="ECO:0007669"/>
    <property type="project" value="UniProtKB-UniRule"/>
</dbReference>
<dbReference type="CDD" id="cd04489">
    <property type="entry name" value="ExoVII_LU_OBF"/>
    <property type="match status" value="1"/>
</dbReference>
<dbReference type="HAMAP" id="MF_00378">
    <property type="entry name" value="Exonuc_7_L"/>
    <property type="match status" value="1"/>
</dbReference>
<dbReference type="InterPro" id="IPR003753">
    <property type="entry name" value="Exonuc_VII_L"/>
</dbReference>
<dbReference type="InterPro" id="IPR020579">
    <property type="entry name" value="Exonuc_VII_lsu_C"/>
</dbReference>
<dbReference type="InterPro" id="IPR025824">
    <property type="entry name" value="OB-fold_nuc-bd_dom"/>
</dbReference>
<dbReference type="NCBIfam" id="TIGR00237">
    <property type="entry name" value="xseA"/>
    <property type="match status" value="1"/>
</dbReference>
<dbReference type="PANTHER" id="PTHR30008">
    <property type="entry name" value="EXODEOXYRIBONUCLEASE 7 LARGE SUBUNIT"/>
    <property type="match status" value="1"/>
</dbReference>
<dbReference type="PANTHER" id="PTHR30008:SF0">
    <property type="entry name" value="EXODEOXYRIBONUCLEASE 7 LARGE SUBUNIT"/>
    <property type="match status" value="1"/>
</dbReference>
<dbReference type="Pfam" id="PF02601">
    <property type="entry name" value="Exonuc_VII_L"/>
    <property type="match status" value="2"/>
</dbReference>
<dbReference type="Pfam" id="PF13742">
    <property type="entry name" value="tRNA_anti_2"/>
    <property type="match status" value="1"/>
</dbReference>
<evidence type="ECO:0000255" key="1">
    <source>
        <dbReference type="HAMAP-Rule" id="MF_00378"/>
    </source>
</evidence>
<reference key="1">
    <citation type="journal article" date="2007" name="PLoS ONE">
        <title>Analysis of the neurotoxin complex genes in Clostridium botulinum A1-A4 and B1 strains: BoNT/A3, /Ba4 and /B1 clusters are located within plasmids.</title>
        <authorList>
            <person name="Smith T.J."/>
            <person name="Hill K.K."/>
            <person name="Foley B.T."/>
            <person name="Detter J.C."/>
            <person name="Munk A.C."/>
            <person name="Bruce D.C."/>
            <person name="Doggett N.A."/>
            <person name="Smith L.A."/>
            <person name="Marks J.D."/>
            <person name="Xie G."/>
            <person name="Brettin T.S."/>
        </authorList>
    </citation>
    <scope>NUCLEOTIDE SEQUENCE [LARGE SCALE GENOMIC DNA]</scope>
    <source>
        <strain>Okra / Type B1</strain>
    </source>
</reference>
<feature type="chain" id="PRO_1000122050" description="Exodeoxyribonuclease 7 large subunit">
    <location>
        <begin position="1"/>
        <end position="403"/>
    </location>
</feature>